<sequence>MNKTKGFTKYKKMRYMPGLDGLRAIAVLGIIIYHLNKQWLTGGFLGVDTFFVISGYLITSLLLKEYDDTGIIKLKSFWIRRLKRLLPAVIVLLMVVGTATLLLKSDNIIRVKHDIIAAIFYVSNWWYIAKDVNYFEQFSFMPLKHLWSLAIEEQFYIFFPVILVTLLLTIKKRYKIGFIFWGVSIISLGLMMFIYSINGDHSRVYFGTDTRLQTLLLGVILAFLWPPFKLKNDPPKVVKYVIDSIGSLSFIVLILLFFIINDETNWIYDGGFYLISILTLFIIASVVHPSTWIAKIFSNPVLVFIGKRSYSLYLWHFAVISFVHSYYVDGQIPVYVYFIDISLTIIFAELSYRFIETPFRKEGIKALNWRPSYIPQFIRMAIVVTLLIPFMLILVGAFNKYGKDIIGEKANSFDTTIEDNYLMRIAPIDNIHIDGLVSEKKKESSDVYNNIKPLLIGDSVMVDIGESFKSSVPKSRIDGKVGRQLYQTLPLVKANYSQYKKSSDQVVLELGTNGDFTVKQLDDLLNQFGKAKIYLVNTRVPRIYEANVNRLLADAAKRKSNVTLIDWNKRSQGHSEYFAPDGVHLEYKGVLALKDEILKALKKK</sequence>
<reference key="1">
    <citation type="journal article" date="2002" name="Lancet">
        <title>Genome and virulence determinants of high virulence community-acquired MRSA.</title>
        <authorList>
            <person name="Baba T."/>
            <person name="Takeuchi F."/>
            <person name="Kuroda M."/>
            <person name="Yuzawa H."/>
            <person name="Aoki K."/>
            <person name="Oguchi A."/>
            <person name="Nagai Y."/>
            <person name="Iwama N."/>
            <person name="Asano K."/>
            <person name="Naimi T."/>
            <person name="Kuroda H."/>
            <person name="Cui L."/>
            <person name="Yamamoto K."/>
            <person name="Hiramatsu K."/>
        </authorList>
    </citation>
    <scope>NUCLEOTIDE SEQUENCE [LARGE SCALE GENOMIC DNA]</scope>
    <source>
        <strain>MW2</strain>
    </source>
</reference>
<accession>Q7A1B1</accession>
<feature type="chain" id="PRO_0000208096" description="Putative O-acetyltransferase MW0856">
    <location>
        <begin position="1"/>
        <end position="604"/>
    </location>
</feature>
<feature type="transmembrane region" description="Helical" evidence="2">
    <location>
        <begin position="15"/>
        <end position="35"/>
    </location>
</feature>
<feature type="transmembrane region" description="Helical" evidence="2">
    <location>
        <begin position="43"/>
        <end position="63"/>
    </location>
</feature>
<feature type="transmembrane region" description="Helical" evidence="2">
    <location>
        <begin position="85"/>
        <end position="105"/>
    </location>
</feature>
<feature type="transmembrane region" description="Helical" evidence="2">
    <location>
        <begin position="150"/>
        <end position="170"/>
    </location>
</feature>
<feature type="transmembrane region" description="Helical" evidence="2">
    <location>
        <begin position="176"/>
        <end position="196"/>
    </location>
</feature>
<feature type="transmembrane region" description="Helical" evidence="2">
    <location>
        <begin position="212"/>
        <end position="232"/>
    </location>
</feature>
<feature type="transmembrane region" description="Helical" evidence="2">
    <location>
        <begin position="240"/>
        <end position="260"/>
    </location>
</feature>
<feature type="transmembrane region" description="Helical" evidence="2">
    <location>
        <begin position="267"/>
        <end position="287"/>
    </location>
</feature>
<feature type="transmembrane region" description="Helical" evidence="2">
    <location>
        <begin position="310"/>
        <end position="330"/>
    </location>
</feature>
<feature type="transmembrane region" description="Helical" evidence="2">
    <location>
        <begin position="332"/>
        <end position="352"/>
    </location>
</feature>
<feature type="transmembrane region" description="Helical" evidence="2">
    <location>
        <begin position="377"/>
        <end position="397"/>
    </location>
</feature>
<feature type="active site" evidence="1">
    <location>
        <position position="459"/>
    </location>
</feature>
<feature type="active site" evidence="1">
    <location>
        <position position="581"/>
    </location>
</feature>
<feature type="active site" evidence="1">
    <location>
        <position position="584"/>
    </location>
</feature>
<name>OTRF1_STAAW</name>
<proteinExistence type="inferred from homology"/>
<dbReference type="EC" id="2.3.1.-"/>
<dbReference type="EMBL" id="BA000033">
    <property type="protein sequence ID" value="BAB94721.1"/>
    <property type="molecule type" value="Genomic_DNA"/>
</dbReference>
<dbReference type="RefSeq" id="WP_001044230.1">
    <property type="nucleotide sequence ID" value="NC_003923.1"/>
</dbReference>
<dbReference type="SMR" id="Q7A1B1"/>
<dbReference type="KEGG" id="sam:MW0856"/>
<dbReference type="HOGENOM" id="CLU_005679_11_2_9"/>
<dbReference type="GO" id="GO:0005886">
    <property type="term" value="C:plasma membrane"/>
    <property type="evidence" value="ECO:0007669"/>
    <property type="project" value="UniProtKB-SubCell"/>
</dbReference>
<dbReference type="GO" id="GO:0016747">
    <property type="term" value="F:acyltransferase activity, transferring groups other than amino-acyl groups"/>
    <property type="evidence" value="ECO:0007669"/>
    <property type="project" value="InterPro"/>
</dbReference>
<dbReference type="GO" id="GO:0009103">
    <property type="term" value="P:lipopolysaccharide biosynthetic process"/>
    <property type="evidence" value="ECO:0007669"/>
    <property type="project" value="TreeGrafter"/>
</dbReference>
<dbReference type="CDD" id="cd01840">
    <property type="entry name" value="SGNH_hydrolase_yrhL_like"/>
    <property type="match status" value="1"/>
</dbReference>
<dbReference type="FunFam" id="3.40.50.1110:FF:000006">
    <property type="entry name" value="O-acetyltransferase OatA"/>
    <property type="match status" value="1"/>
</dbReference>
<dbReference type="Gene3D" id="3.40.50.1110">
    <property type="entry name" value="SGNH hydrolase"/>
    <property type="match status" value="1"/>
</dbReference>
<dbReference type="InterPro" id="IPR002656">
    <property type="entry name" value="Acyl_transf_3_dom"/>
</dbReference>
<dbReference type="InterPro" id="IPR050879">
    <property type="entry name" value="Acyltransferase_3"/>
</dbReference>
<dbReference type="InterPro" id="IPR036514">
    <property type="entry name" value="SGNH_hydro_sf"/>
</dbReference>
<dbReference type="PANTHER" id="PTHR23028">
    <property type="entry name" value="ACETYLTRANSFERASE"/>
    <property type="match status" value="1"/>
</dbReference>
<dbReference type="PANTHER" id="PTHR23028:SF53">
    <property type="entry name" value="ACYL_TRANSF_3 DOMAIN-CONTAINING PROTEIN"/>
    <property type="match status" value="1"/>
</dbReference>
<dbReference type="Pfam" id="PF01757">
    <property type="entry name" value="Acyl_transf_3"/>
    <property type="match status" value="1"/>
</dbReference>
<dbReference type="SUPFAM" id="SSF52266">
    <property type="entry name" value="SGNH hydrolase"/>
    <property type="match status" value="1"/>
</dbReference>
<protein>
    <recommendedName>
        <fullName>Putative O-acetyltransferase MW0856</fullName>
        <ecNumber>2.3.1.-</ecNumber>
    </recommendedName>
</protein>
<gene>
    <name type="ordered locus">MW0856</name>
</gene>
<comment type="subcellular location">
    <subcellularLocation>
        <location evidence="3">Cell membrane</location>
        <topology evidence="3">Multi-pass membrane protein</topology>
    </subcellularLocation>
</comment>
<comment type="similarity">
    <text evidence="3">Belongs to the acyltransferase 3 family.</text>
</comment>
<keyword id="KW-0012">Acyltransferase</keyword>
<keyword id="KW-1003">Cell membrane</keyword>
<keyword id="KW-0472">Membrane</keyword>
<keyword id="KW-0808">Transferase</keyword>
<keyword id="KW-0812">Transmembrane</keyword>
<keyword id="KW-1133">Transmembrane helix</keyword>
<evidence type="ECO:0000250" key="1">
    <source>
        <dbReference type="UniProtKB" id="Q2FV54"/>
    </source>
</evidence>
<evidence type="ECO:0000255" key="2"/>
<evidence type="ECO:0000305" key="3"/>
<organism>
    <name type="scientific">Staphylococcus aureus (strain MW2)</name>
    <dbReference type="NCBI Taxonomy" id="196620"/>
    <lineage>
        <taxon>Bacteria</taxon>
        <taxon>Bacillati</taxon>
        <taxon>Bacillota</taxon>
        <taxon>Bacilli</taxon>
        <taxon>Bacillales</taxon>
        <taxon>Staphylococcaceae</taxon>
        <taxon>Staphylococcus</taxon>
    </lineage>
</organism>